<comment type="function">
    <text evidence="1">Component of the PAN1 actin cytoskeleton-regulatory complex required for the internalization of endosomes during actin-coupled endocytosis. The complex links the site of endocytosis to the cell membrane-associated actin cytoskeleton. Mediates uptake of external molecules and vacuolar degradation of plasma membrane proteins. Plays a role in the proper organization of the cell membrane-associated actin cytoskeleton and promotes its destabilization (By similarity).</text>
</comment>
<comment type="subunit">
    <text evidence="1">Component of the PAN1 actin cytoskeleton-regulatory complex.</text>
</comment>
<comment type="subcellular location">
    <subcellularLocation>
        <location evidence="1">Cell membrane</location>
        <topology evidence="1">Peripheral membrane protein</topology>
        <orientation evidence="1">Cytoplasmic side</orientation>
    </subcellularLocation>
    <subcellularLocation>
        <location evidence="1">Endosome membrane</location>
        <topology evidence="1">Peripheral membrane protein</topology>
        <orientation evidence="1">Cytoplasmic side</orientation>
    </subcellularLocation>
    <subcellularLocation>
        <location evidence="1">Cytoplasm</location>
        <location evidence="1">Cytoskeleton</location>
        <location evidence="1">Actin patch</location>
    </subcellularLocation>
    <text evidence="1">Cytoplasmic and cortical actin patches.</text>
</comment>
<comment type="similarity">
    <text evidence="7">Belongs to the PAN1 family.</text>
</comment>
<dbReference type="EMBL" id="CH981524">
    <property type="protein sequence ID" value="EDK43144.1"/>
    <property type="molecule type" value="Genomic_DNA"/>
</dbReference>
<dbReference type="RefSeq" id="XP_001528802.1">
    <property type="nucleotide sequence ID" value="XM_001528752.1"/>
</dbReference>
<dbReference type="SMR" id="A5DVD6"/>
<dbReference type="FunCoup" id="A5DVD6">
    <property type="interactions" value="57"/>
</dbReference>
<dbReference type="GeneID" id="5235850"/>
<dbReference type="KEGG" id="lel:PVL30_001293"/>
<dbReference type="VEuPathDB" id="FungiDB:LELG_01322"/>
<dbReference type="eggNOG" id="KOG0998">
    <property type="taxonomic scope" value="Eukaryota"/>
</dbReference>
<dbReference type="HOGENOM" id="CLU_001619_0_0_1"/>
<dbReference type="InParanoid" id="A5DVD6"/>
<dbReference type="OMA" id="GMPGQWG"/>
<dbReference type="OrthoDB" id="2015333at2759"/>
<dbReference type="Proteomes" id="UP000001996">
    <property type="component" value="Unassembled WGS sequence"/>
</dbReference>
<dbReference type="GO" id="GO:0030479">
    <property type="term" value="C:actin cortical patch"/>
    <property type="evidence" value="ECO:0007669"/>
    <property type="project" value="UniProtKB-SubCell"/>
</dbReference>
<dbReference type="GO" id="GO:0010008">
    <property type="term" value="C:endosome membrane"/>
    <property type="evidence" value="ECO:0007669"/>
    <property type="project" value="UniProtKB-SubCell"/>
</dbReference>
<dbReference type="GO" id="GO:0005886">
    <property type="term" value="C:plasma membrane"/>
    <property type="evidence" value="ECO:0007669"/>
    <property type="project" value="UniProtKB-SubCell"/>
</dbReference>
<dbReference type="GO" id="GO:0003779">
    <property type="term" value="F:actin binding"/>
    <property type="evidence" value="ECO:0007669"/>
    <property type="project" value="UniProtKB-KW"/>
</dbReference>
<dbReference type="GO" id="GO:0005509">
    <property type="term" value="F:calcium ion binding"/>
    <property type="evidence" value="ECO:0007669"/>
    <property type="project" value="InterPro"/>
</dbReference>
<dbReference type="GO" id="GO:0006897">
    <property type="term" value="P:endocytosis"/>
    <property type="evidence" value="ECO:0007669"/>
    <property type="project" value="UniProtKB-KW"/>
</dbReference>
<dbReference type="GO" id="GO:0016197">
    <property type="term" value="P:endosomal transport"/>
    <property type="evidence" value="ECO:0007669"/>
    <property type="project" value="TreeGrafter"/>
</dbReference>
<dbReference type="CDD" id="cd00052">
    <property type="entry name" value="EH"/>
    <property type="match status" value="2"/>
</dbReference>
<dbReference type="FunFam" id="1.10.238.10:FF:000349">
    <property type="entry name" value="Actin cytoskeleton-regulatory complex protein PAN1"/>
    <property type="match status" value="1"/>
</dbReference>
<dbReference type="Gene3D" id="1.10.238.10">
    <property type="entry name" value="EF-hand"/>
    <property type="match status" value="2"/>
</dbReference>
<dbReference type="InterPro" id="IPR013182">
    <property type="entry name" value="DUF1720"/>
</dbReference>
<dbReference type="InterPro" id="IPR011992">
    <property type="entry name" value="EF-hand-dom_pair"/>
</dbReference>
<dbReference type="InterPro" id="IPR002048">
    <property type="entry name" value="EF_hand_dom"/>
</dbReference>
<dbReference type="InterPro" id="IPR000261">
    <property type="entry name" value="EH_dom"/>
</dbReference>
<dbReference type="InterPro" id="IPR003124">
    <property type="entry name" value="WH2_dom"/>
</dbReference>
<dbReference type="PANTHER" id="PTHR11216:SF173">
    <property type="entry name" value="ACTIN CYTOSKELETON-REGULATORY COMPLEX PROTEIN PAN1"/>
    <property type="match status" value="1"/>
</dbReference>
<dbReference type="PANTHER" id="PTHR11216">
    <property type="entry name" value="EH DOMAIN"/>
    <property type="match status" value="1"/>
</dbReference>
<dbReference type="Pfam" id="PF08226">
    <property type="entry name" value="DUF1720"/>
    <property type="match status" value="2"/>
</dbReference>
<dbReference type="Pfam" id="PF12763">
    <property type="entry name" value="EH"/>
    <property type="match status" value="2"/>
</dbReference>
<dbReference type="Pfam" id="PF02205">
    <property type="entry name" value="WH2"/>
    <property type="match status" value="1"/>
</dbReference>
<dbReference type="SMART" id="SM00027">
    <property type="entry name" value="EH"/>
    <property type="match status" value="2"/>
</dbReference>
<dbReference type="SUPFAM" id="SSF47473">
    <property type="entry name" value="EF-hand"/>
    <property type="match status" value="2"/>
</dbReference>
<dbReference type="PROSITE" id="PS50222">
    <property type="entry name" value="EF_HAND_2"/>
    <property type="match status" value="2"/>
</dbReference>
<dbReference type="PROSITE" id="PS50031">
    <property type="entry name" value="EH"/>
    <property type="match status" value="2"/>
</dbReference>
<dbReference type="PROSITE" id="PS51082">
    <property type="entry name" value="WH2"/>
    <property type="match status" value="1"/>
</dbReference>
<reference key="1">
    <citation type="journal article" date="2009" name="Nature">
        <title>Evolution of pathogenicity and sexual reproduction in eight Candida genomes.</title>
        <authorList>
            <person name="Butler G."/>
            <person name="Rasmussen M.D."/>
            <person name="Lin M.F."/>
            <person name="Santos M.A.S."/>
            <person name="Sakthikumar S."/>
            <person name="Munro C.A."/>
            <person name="Rheinbay E."/>
            <person name="Grabherr M."/>
            <person name="Forche A."/>
            <person name="Reedy J.L."/>
            <person name="Agrafioti I."/>
            <person name="Arnaud M.B."/>
            <person name="Bates S."/>
            <person name="Brown A.J.P."/>
            <person name="Brunke S."/>
            <person name="Costanzo M.C."/>
            <person name="Fitzpatrick D.A."/>
            <person name="de Groot P.W.J."/>
            <person name="Harris D."/>
            <person name="Hoyer L.L."/>
            <person name="Hube B."/>
            <person name="Klis F.M."/>
            <person name="Kodira C."/>
            <person name="Lennard N."/>
            <person name="Logue M.E."/>
            <person name="Martin R."/>
            <person name="Neiman A.M."/>
            <person name="Nikolaou E."/>
            <person name="Quail M.A."/>
            <person name="Quinn J."/>
            <person name="Santos M.C."/>
            <person name="Schmitzberger F.F."/>
            <person name="Sherlock G."/>
            <person name="Shah P."/>
            <person name="Silverstein K.A.T."/>
            <person name="Skrzypek M.S."/>
            <person name="Soll D."/>
            <person name="Staggs R."/>
            <person name="Stansfield I."/>
            <person name="Stumpf M.P.H."/>
            <person name="Sudbery P.E."/>
            <person name="Srikantha T."/>
            <person name="Zeng Q."/>
            <person name="Berman J."/>
            <person name="Berriman M."/>
            <person name="Heitman J."/>
            <person name="Gow N.A.R."/>
            <person name="Lorenz M.C."/>
            <person name="Birren B.W."/>
            <person name="Kellis M."/>
            <person name="Cuomo C.A."/>
        </authorList>
    </citation>
    <scope>NUCLEOTIDE SEQUENCE [LARGE SCALE GENOMIC DNA]</scope>
    <source>
        <strain>ATCC 11503 / BCRC 21390 / CBS 2605 / JCM 1781 / NBRC 1676 / NRRL YB-4239</strain>
    </source>
</reference>
<feature type="chain" id="PRO_0000349478" description="Actin cytoskeleton-regulatory complex protein PAN1">
    <location>
        <begin position="1"/>
        <end position="1505"/>
    </location>
</feature>
<feature type="domain" description="EH 1" evidence="3">
    <location>
        <begin position="85"/>
        <end position="174"/>
    </location>
</feature>
<feature type="domain" description="EF-hand 1" evidence="5">
    <location>
        <begin position="118"/>
        <end position="153"/>
    </location>
</feature>
<feature type="domain" description="EH 2" evidence="3">
    <location>
        <begin position="492"/>
        <end position="581"/>
    </location>
</feature>
<feature type="domain" description="EF-hand 2" evidence="5">
    <location>
        <begin position="525"/>
        <end position="560"/>
    </location>
</feature>
<feature type="domain" description="WH2" evidence="4">
    <location>
        <begin position="1474"/>
        <end position="1491"/>
    </location>
</feature>
<feature type="region of interest" description="Disordered" evidence="6">
    <location>
        <begin position="1"/>
        <end position="30"/>
    </location>
</feature>
<feature type="region of interest" description="Disordered" evidence="6">
    <location>
        <begin position="364"/>
        <end position="416"/>
    </location>
</feature>
<feature type="region of interest" description="Disordered" evidence="6">
    <location>
        <begin position="422"/>
        <end position="441"/>
    </location>
</feature>
<feature type="region of interest" description="Disordered" evidence="6">
    <location>
        <begin position="588"/>
        <end position="620"/>
    </location>
</feature>
<feature type="region of interest" description="Disordered" evidence="6">
    <location>
        <begin position="867"/>
        <end position="927"/>
    </location>
</feature>
<feature type="region of interest" description="Disordered" evidence="6">
    <location>
        <begin position="948"/>
        <end position="1505"/>
    </location>
</feature>
<feature type="coiled-coil region" evidence="2">
    <location>
        <begin position="677"/>
        <end position="752"/>
    </location>
</feature>
<feature type="compositionally biased region" description="Polar residues" evidence="6">
    <location>
        <begin position="364"/>
        <end position="393"/>
    </location>
</feature>
<feature type="compositionally biased region" description="Polar residues" evidence="6">
    <location>
        <begin position="403"/>
        <end position="413"/>
    </location>
</feature>
<feature type="compositionally biased region" description="Polar residues" evidence="6">
    <location>
        <begin position="588"/>
        <end position="604"/>
    </location>
</feature>
<feature type="compositionally biased region" description="Polar residues" evidence="6">
    <location>
        <begin position="872"/>
        <end position="885"/>
    </location>
</feature>
<feature type="compositionally biased region" description="Basic and acidic residues" evidence="6">
    <location>
        <begin position="960"/>
        <end position="980"/>
    </location>
</feature>
<feature type="compositionally biased region" description="Basic and acidic residues" evidence="6">
    <location>
        <begin position="1034"/>
        <end position="1050"/>
    </location>
</feature>
<feature type="compositionally biased region" description="Basic and acidic residues" evidence="6">
    <location>
        <begin position="1069"/>
        <end position="1079"/>
    </location>
</feature>
<feature type="compositionally biased region" description="Polar residues" evidence="6">
    <location>
        <begin position="1086"/>
        <end position="1096"/>
    </location>
</feature>
<feature type="compositionally biased region" description="Basic and acidic residues" evidence="6">
    <location>
        <begin position="1109"/>
        <end position="1123"/>
    </location>
</feature>
<feature type="compositionally biased region" description="Low complexity" evidence="6">
    <location>
        <begin position="1133"/>
        <end position="1175"/>
    </location>
</feature>
<feature type="compositionally biased region" description="Polar residues" evidence="6">
    <location>
        <begin position="1193"/>
        <end position="1208"/>
    </location>
</feature>
<feature type="compositionally biased region" description="Acidic residues" evidence="6">
    <location>
        <begin position="1216"/>
        <end position="1225"/>
    </location>
</feature>
<feature type="compositionally biased region" description="Basic and acidic residues" evidence="6">
    <location>
        <begin position="1261"/>
        <end position="1280"/>
    </location>
</feature>
<feature type="compositionally biased region" description="Polar residues" evidence="6">
    <location>
        <begin position="1283"/>
        <end position="1319"/>
    </location>
</feature>
<feature type="compositionally biased region" description="Low complexity" evidence="6">
    <location>
        <begin position="1321"/>
        <end position="1330"/>
    </location>
</feature>
<feature type="compositionally biased region" description="Pro residues" evidence="6">
    <location>
        <begin position="1331"/>
        <end position="1453"/>
    </location>
</feature>
<feature type="compositionally biased region" description="Low complexity" evidence="6">
    <location>
        <begin position="1454"/>
        <end position="1472"/>
    </location>
</feature>
<gene>
    <name type="primary">PAN1</name>
    <name type="ORF">LELG_01322</name>
</gene>
<sequence>MFNSYQATGMGYNPNQQQQQPPPPQQQQQLYSQPTAFGQPNLYGSNMQQGYIQTQPTGFAGAPTVIENNELKIPSIRLSFITAEDQKKFEHLFRSAVPRGEQSMSGDTASNILLRSGLTPVVLAEIWTLSDIDKTGALLFPEFALSLHLCNMAKRGEPLPGVLPQKWHNEVQSFIDAINFSIPDDPNKILANTPFAKKDDWLSNVGQPQSNWMAPQGTGYPQTSFLQNQATGFAQQPTGFGQQATGFGQQATGFGQQSSWLAPQATGFNNSAPPPSTSFGGTGTGIVAGAGAGASAAPTGGFVPLQPQQTAGLIQKPAGLQPQSTGFMAPQRTGGLAPQATGLAPQATGLQAQRTGGFGVPQQATGYQQSFNTGGLQANKTGPLQPNHTGYNFQQQQQQQQQATGLQRQPTGVLQQQPTGYLQQQPTGYLQSQPTGRPGEWGFVSMPTGGMPGLNSMQQVFQPNNTQTYQDLHKVMNDNSASNVTWAISKQEKQIYDRLFQAWDTGRNGYVDSNVALNVFTKSGLGRQDLEAIWTLADTDDVGKLNKNQFAVAMHLIYRRLNGLEIPLRLPPELIPPADKTLKDTMDSLKNSLKNGGAKQTRSKPMTKPDGSRFKNDDSDFGYVSSSRYKKKSEEEKQANARTSKDFGLSIDDMKKLIREKKILIDAMDVEDEDRQRTSDREVDALKSKIYELQKKLSGSSNNGGNSKEALLAKLERTGKRIPSLLQQLNQVNQEISEKSVELVKLQLKREDPSWDEAKVDVSGAGGKFDLKQKMAMLTGKGGSAMADSKYRDAVEKSKSDLKNQSDMVKDIESGIRSLEDDCSAKLRTTAKNAVGYEKWENGFGVSKAVADFVKELNKLKADAQPEFARSADNTTTARSSSAYAQQVPPAASRTFSAQETNASPGAVTSTGTGGSGSGSGSATYSTPEERAAYIKAEAAKRMASRLEKLGISRTKRAPKAAEKHDEIVSKPSPSREEPPRLSGEAAIANPVERAPSADKTPVNTAHAESHAQTTSSNRAPEAKPEQVSVPVESQRENFRENKWDEEKQYRPSQTNNNDNNNISSTHQSQEHIVKENAKNVESAPQAPTSNYSQQPPAFGGAFQSESSRATETEQAESKKESETTPVVPPAPAAASTEPAQPAQPAQASQASKPAQPAQPANSTEPASASASEQPAVRRHENNPFFKNKFQPVDTQKISMQRNFQRGTSNDNSWSDSEEEDSEDEAPNRAGAAQLANLLFGSMSSQPTGNAAFAKSAAQEPSKDEKSIGAENASGHESKMNAELSSSENTAAGVSQVNETPAQSSYEEPSLQEQSSYESNAVPAAPSLPESVPPPAPAPEAPSLPQSVPPPPPIPSEYSAPPAPSLPRDVPPAPEAPSLPQSIPPPPPVPSEYSAPPAPPAPPAPSLPQSIPPPPPVPSEYSAPPAPPAPPAPPAPPAPSLPSSIPPPPPAPPLSSNDSSLASAAAPPAGGAPNIGALLGQITGGKSLKKVETKVSSGATVGRVL</sequence>
<organism>
    <name type="scientific">Lodderomyces elongisporus (strain ATCC 11503 / CBS 2605 / JCM 1781 / NBRC 1676 / NRRL YB-4239)</name>
    <name type="common">Yeast</name>
    <name type="synonym">Saccharomyces elongisporus</name>
    <dbReference type="NCBI Taxonomy" id="379508"/>
    <lineage>
        <taxon>Eukaryota</taxon>
        <taxon>Fungi</taxon>
        <taxon>Dikarya</taxon>
        <taxon>Ascomycota</taxon>
        <taxon>Saccharomycotina</taxon>
        <taxon>Pichiomycetes</taxon>
        <taxon>Debaryomycetaceae</taxon>
        <taxon>Candida/Lodderomyces clade</taxon>
        <taxon>Lodderomyces</taxon>
    </lineage>
</organism>
<proteinExistence type="inferred from homology"/>
<protein>
    <recommendedName>
        <fullName>Actin cytoskeleton-regulatory complex protein PAN1</fullName>
    </recommendedName>
</protein>
<keyword id="KW-0009">Actin-binding</keyword>
<keyword id="KW-1003">Cell membrane</keyword>
<keyword id="KW-0175">Coiled coil</keyword>
<keyword id="KW-0963">Cytoplasm</keyword>
<keyword id="KW-0206">Cytoskeleton</keyword>
<keyword id="KW-0254">Endocytosis</keyword>
<keyword id="KW-0967">Endosome</keyword>
<keyword id="KW-0472">Membrane</keyword>
<keyword id="KW-1185">Reference proteome</keyword>
<keyword id="KW-0677">Repeat</keyword>
<evidence type="ECO:0000250" key="1"/>
<evidence type="ECO:0000255" key="2"/>
<evidence type="ECO:0000255" key="3">
    <source>
        <dbReference type="PROSITE-ProRule" id="PRU00077"/>
    </source>
</evidence>
<evidence type="ECO:0000255" key="4">
    <source>
        <dbReference type="PROSITE-ProRule" id="PRU00406"/>
    </source>
</evidence>
<evidence type="ECO:0000255" key="5">
    <source>
        <dbReference type="PROSITE-ProRule" id="PRU00448"/>
    </source>
</evidence>
<evidence type="ECO:0000256" key="6">
    <source>
        <dbReference type="SAM" id="MobiDB-lite"/>
    </source>
</evidence>
<evidence type="ECO:0000305" key="7"/>
<accession>A5DVD6</accession>
<name>PAN1_LODEL</name>